<reference key="1">
    <citation type="submission" date="2005-02" db="EMBL/GenBank/DDBJ databases">
        <authorList>
            <consortium name="NIH - Xenopus Gene Collection (XGC) project"/>
        </authorList>
    </citation>
    <scope>NUCLEOTIDE SEQUENCE [LARGE SCALE MRNA]</scope>
</reference>
<comment type="similarity">
    <text evidence="3">Belongs to the GDAP2 family.</text>
</comment>
<dbReference type="EMBL" id="BC090810">
    <property type="protein sequence ID" value="AAH90810.1"/>
    <property type="molecule type" value="mRNA"/>
</dbReference>
<dbReference type="RefSeq" id="NP_001015874.1">
    <property type="nucleotide sequence ID" value="NM_001015874.1"/>
</dbReference>
<dbReference type="RefSeq" id="XP_031751794.1">
    <property type="nucleotide sequence ID" value="XM_031895934.1"/>
</dbReference>
<dbReference type="SMR" id="Q5CZL1"/>
<dbReference type="FunCoup" id="Q5CZL1">
    <property type="interactions" value="1153"/>
</dbReference>
<dbReference type="STRING" id="8364.ENSXETP00000001050"/>
<dbReference type="PaxDb" id="8364-ENSXETP00000021862"/>
<dbReference type="DNASU" id="548591"/>
<dbReference type="GeneID" id="548591"/>
<dbReference type="KEGG" id="xtr:548591"/>
<dbReference type="CTD" id="54834"/>
<dbReference type="eggNOG" id="KOG2633">
    <property type="taxonomic scope" value="Eukaryota"/>
</dbReference>
<dbReference type="InParanoid" id="Q5CZL1"/>
<dbReference type="OMA" id="IHPTFWT"/>
<dbReference type="OrthoDB" id="365077at2759"/>
<dbReference type="Proteomes" id="UP000008143">
    <property type="component" value="Chromosome 2"/>
</dbReference>
<dbReference type="Bgee" id="ENSXETG00000009921">
    <property type="expression patterns" value="Expressed in skeletal muscle tissue and 13 other cell types or tissues"/>
</dbReference>
<dbReference type="CDD" id="cd02905">
    <property type="entry name" value="Macro_GDAP2-like"/>
    <property type="match status" value="1"/>
</dbReference>
<dbReference type="CDD" id="cd00170">
    <property type="entry name" value="SEC14"/>
    <property type="match status" value="1"/>
</dbReference>
<dbReference type="Gene3D" id="3.40.525.10">
    <property type="entry name" value="CRAL-TRIO lipid binding domain"/>
    <property type="match status" value="1"/>
</dbReference>
<dbReference type="Gene3D" id="3.40.220.10">
    <property type="entry name" value="Leucine Aminopeptidase, subunit E, domain 1"/>
    <property type="match status" value="1"/>
</dbReference>
<dbReference type="InterPro" id="IPR001251">
    <property type="entry name" value="CRAL-TRIO_dom"/>
</dbReference>
<dbReference type="InterPro" id="IPR036865">
    <property type="entry name" value="CRAL-TRIO_dom_sf"/>
</dbReference>
<dbReference type="InterPro" id="IPR002589">
    <property type="entry name" value="Macro_dom"/>
</dbReference>
<dbReference type="InterPro" id="IPR043472">
    <property type="entry name" value="Macro_dom-like"/>
</dbReference>
<dbReference type="InterPro" id="IPR035793">
    <property type="entry name" value="Macro_GDAP2"/>
</dbReference>
<dbReference type="PANTHER" id="PTHR11106">
    <property type="entry name" value="GANGLIOSIDE INDUCED DIFFERENTIATION ASSOCIATED PROTEIN 2-RELATED"/>
    <property type="match status" value="1"/>
</dbReference>
<dbReference type="PANTHER" id="PTHR11106:SF72">
    <property type="entry name" value="GANGLIOSIDE-INDUCED DIFFERENTIATION-ASSOCIATED PROTEIN 2"/>
    <property type="match status" value="1"/>
</dbReference>
<dbReference type="Pfam" id="PF13716">
    <property type="entry name" value="CRAL_TRIO_2"/>
    <property type="match status" value="1"/>
</dbReference>
<dbReference type="Pfam" id="PF01661">
    <property type="entry name" value="Macro"/>
    <property type="match status" value="1"/>
</dbReference>
<dbReference type="SMART" id="SM00506">
    <property type="entry name" value="A1pp"/>
    <property type="match status" value="1"/>
</dbReference>
<dbReference type="SMART" id="SM00516">
    <property type="entry name" value="SEC14"/>
    <property type="match status" value="1"/>
</dbReference>
<dbReference type="SUPFAM" id="SSF52087">
    <property type="entry name" value="CRAL/TRIO domain"/>
    <property type="match status" value="1"/>
</dbReference>
<dbReference type="SUPFAM" id="SSF52949">
    <property type="entry name" value="Macro domain-like"/>
    <property type="match status" value="1"/>
</dbReference>
<dbReference type="PROSITE" id="PS51154">
    <property type="entry name" value="MACRO"/>
    <property type="match status" value="1"/>
</dbReference>
<organism>
    <name type="scientific">Xenopus tropicalis</name>
    <name type="common">Western clawed frog</name>
    <name type="synonym">Silurana tropicalis</name>
    <dbReference type="NCBI Taxonomy" id="8364"/>
    <lineage>
        <taxon>Eukaryota</taxon>
        <taxon>Metazoa</taxon>
        <taxon>Chordata</taxon>
        <taxon>Craniata</taxon>
        <taxon>Vertebrata</taxon>
        <taxon>Euteleostomi</taxon>
        <taxon>Amphibia</taxon>
        <taxon>Batrachia</taxon>
        <taxon>Anura</taxon>
        <taxon>Pipoidea</taxon>
        <taxon>Pipidae</taxon>
        <taxon>Xenopodinae</taxon>
        <taxon>Xenopus</taxon>
        <taxon>Silurana</taxon>
    </lineage>
</organism>
<name>GDAP2_XENTR</name>
<keyword id="KW-1185">Reference proteome</keyword>
<evidence type="ECO:0000255" key="1">
    <source>
        <dbReference type="PROSITE-ProRule" id="PRU00490"/>
    </source>
</evidence>
<evidence type="ECO:0000256" key="2">
    <source>
        <dbReference type="SAM" id="MobiDB-lite"/>
    </source>
</evidence>
<evidence type="ECO:0000305" key="3"/>
<proteinExistence type="evidence at transcript level"/>
<feature type="chain" id="PRO_0000331400" description="Ganglioside-induced differentiation-associated protein 2">
    <location>
        <begin position="1"/>
        <end position="496"/>
    </location>
</feature>
<feature type="domain" description="Macro" evidence="1">
    <location>
        <begin position="44"/>
        <end position="224"/>
    </location>
</feature>
<feature type="domain" description="CRAL-TRIO">
    <location>
        <begin position="329"/>
        <end position="483"/>
    </location>
</feature>
<feature type="region of interest" description="Disordered" evidence="2">
    <location>
        <begin position="22"/>
        <end position="45"/>
    </location>
</feature>
<feature type="region of interest" description="Disordered" evidence="2">
    <location>
        <begin position="252"/>
        <end position="271"/>
    </location>
</feature>
<feature type="compositionally biased region" description="Basic and acidic residues" evidence="2">
    <location>
        <begin position="254"/>
        <end position="264"/>
    </location>
</feature>
<protein>
    <recommendedName>
        <fullName>Ganglioside-induced differentiation-associated protein 2</fullName>
    </recommendedName>
</protein>
<accession>Q5CZL1</accession>
<sequence>MDPLGARSCFVDADALPCWADVRDGEGEDVPDGGRKDAPHGGLHSPFPYRNDINKKVILWRGDVALLSCTALVNTSNETLTDKNPVSDSIFRYSGPELSEEMQKLKGCRTGEAKLTKGFNLAARYIIHTVGPKYKTKYRTAAESSLYSCYRNVLQLAKEQGMASVGFCVIATQKRCYPPEDSTHIALRTVRRFLEAHGAALEKVVFAVTEQEEGTYRRLLPLYFPRSLEEEQRSIPFLPQDIGNAEGEPVVPERQIRISEKPGGQDDDSEEEGLVKDLSVIGSHAFARMEGDVDKQRRLALQGQLSGAAMQKQHQRNYNRWLSRARTEDLSDIAALKALYQSGVDNCGRTVMVVVGRNIPVLLIDMEKALLYFIHMMDHVAAKEYVLVYFHTLTGEHNHPDSDFLKNMYDIVDVKYKKNLKALYFVHPTFRSKVSSWFFTTFTVSGLKDKVHQVESLHQLFSAVPPEQIEIPPFVLDYDARENGPFFPSQSSFLSL</sequence>